<accession>Q07DW1</accession>
<protein>
    <recommendedName>
        <fullName>Testin</fullName>
    </recommendedName>
</protein>
<organism>
    <name type="scientific">Aotus nancymaae</name>
    <name type="common">Ma's night monkey</name>
    <dbReference type="NCBI Taxonomy" id="37293"/>
    <lineage>
        <taxon>Eukaryota</taxon>
        <taxon>Metazoa</taxon>
        <taxon>Chordata</taxon>
        <taxon>Craniata</taxon>
        <taxon>Vertebrata</taxon>
        <taxon>Euteleostomi</taxon>
        <taxon>Mammalia</taxon>
        <taxon>Eutheria</taxon>
        <taxon>Euarchontoglires</taxon>
        <taxon>Primates</taxon>
        <taxon>Haplorrhini</taxon>
        <taxon>Platyrrhini</taxon>
        <taxon>Aotidae</taxon>
        <taxon>Aotus</taxon>
    </lineage>
</organism>
<name>TES_AOTNA</name>
<gene>
    <name type="primary">TES</name>
</gene>
<evidence type="ECO:0000250" key="1"/>
<evidence type="ECO:0000255" key="2">
    <source>
        <dbReference type="PROSITE-ProRule" id="PRU00125"/>
    </source>
</evidence>
<evidence type="ECO:0000255" key="3">
    <source>
        <dbReference type="PROSITE-ProRule" id="PRU00636"/>
    </source>
</evidence>
<evidence type="ECO:0000256" key="4">
    <source>
        <dbReference type="SAM" id="MobiDB-lite"/>
    </source>
</evidence>
<evidence type="ECO:0000305" key="5"/>
<comment type="function">
    <text evidence="1">Scaffold protein that may play a role in cell adhesion, cell spreading and in the reorganization of the actin cytoskeleton. Plays a role in the regulation of cell proliferation. May act as a tumor suppressor (By similarity).</text>
</comment>
<comment type="subunit">
    <text evidence="1">Interacts via LIM domain 1 with ZYX. Interacts (via LIM domain 3) with ENAH and VASP. Interacts with ALKBH4, talin, actin, alpha-actinin, GRIP1 and PXN (By similarity). Interacts (via LIM domain 2) with ACTL7A (via N-terminus). Heterodimer with ACTL7A; the heterodimer interacts with ENAH to form a heterotrimer (By similarity).</text>
</comment>
<comment type="subcellular location">
    <subcellularLocation>
        <location evidence="1">Cytoplasm</location>
    </subcellularLocation>
    <subcellularLocation>
        <location evidence="1">Cell junction</location>
        <location evidence="1">Focal adhesion</location>
    </subcellularLocation>
    <text evidence="1">Detected along actin stress fibers.</text>
</comment>
<comment type="domain">
    <text evidence="1">The N-terminal and the C-terminal halves of the protein can associate with each other, thereby hindering interactions with ZYX.</text>
</comment>
<comment type="similarity">
    <text evidence="5">Belongs to the prickle / espinas / testin family.</text>
</comment>
<reference key="1">
    <citation type="submission" date="2006-09" db="EMBL/GenBank/DDBJ databases">
        <title>NISC comparative sequencing initiative.</title>
        <authorList>
            <person name="Antonellis A."/>
            <person name="Ayele K."/>
            <person name="Benjamin B."/>
            <person name="Blakesley R.W."/>
            <person name="Boakye A."/>
            <person name="Bouffard G.G."/>
            <person name="Brinkley C."/>
            <person name="Brooks S."/>
            <person name="Chu G."/>
            <person name="Coleman H."/>
            <person name="Engle J."/>
            <person name="Gestole M."/>
            <person name="Greene A."/>
            <person name="Guan X."/>
            <person name="Gupta J."/>
            <person name="Haghighi P."/>
            <person name="Han J."/>
            <person name="Hansen N."/>
            <person name="Ho S.-L."/>
            <person name="Hu P."/>
            <person name="Hunter G."/>
            <person name="Hurle B."/>
            <person name="Idol J.R."/>
            <person name="Kwong P."/>
            <person name="Laric P."/>
            <person name="Larson S."/>
            <person name="Lee-Lin S.-Q."/>
            <person name="Legaspi R."/>
            <person name="Madden M."/>
            <person name="Maduro Q.L."/>
            <person name="Maduro V.B."/>
            <person name="Margulies E.H."/>
            <person name="Masiello C."/>
            <person name="Maskeri B."/>
            <person name="McDowell J."/>
            <person name="Mojidi H.A."/>
            <person name="Mullikin J.C."/>
            <person name="Oestreicher J.S."/>
            <person name="Park M."/>
            <person name="Portnoy M.E."/>
            <person name="Prasad A."/>
            <person name="Puri O."/>
            <person name="Reddix-Dugue N."/>
            <person name="Schandler K."/>
            <person name="Schueler M.G."/>
            <person name="Sison C."/>
            <person name="Stantripop S."/>
            <person name="Stephen E."/>
            <person name="Taye A."/>
            <person name="Thomas J.W."/>
            <person name="Thomas P.J."/>
            <person name="Tsipouri V."/>
            <person name="Ung L."/>
            <person name="Vogt J.L."/>
            <person name="Wetherby K.D."/>
            <person name="Young A."/>
            <person name="Green E.D."/>
        </authorList>
    </citation>
    <scope>NUCLEOTIDE SEQUENCE [LARGE SCALE GENOMIC DNA]</scope>
</reference>
<keyword id="KW-0965">Cell junction</keyword>
<keyword id="KW-0963">Cytoplasm</keyword>
<keyword id="KW-0440">LIM domain</keyword>
<keyword id="KW-0479">Metal-binding</keyword>
<keyword id="KW-1185">Reference proteome</keyword>
<keyword id="KW-0677">Repeat</keyword>
<keyword id="KW-0862">Zinc</keyword>
<feature type="chain" id="PRO_0000260326" description="Testin">
    <location>
        <begin position="1"/>
        <end position="421"/>
    </location>
</feature>
<feature type="domain" description="PET" evidence="3">
    <location>
        <begin position="92"/>
        <end position="199"/>
    </location>
</feature>
<feature type="domain" description="LIM zinc-binding 1" evidence="2">
    <location>
        <begin position="234"/>
        <end position="297"/>
    </location>
</feature>
<feature type="domain" description="LIM zinc-binding 2" evidence="2">
    <location>
        <begin position="299"/>
        <end position="359"/>
    </location>
</feature>
<feature type="domain" description="LIM zinc-binding 3" evidence="2">
    <location>
        <begin position="362"/>
        <end position="421"/>
    </location>
</feature>
<feature type="region of interest" description="Disordered" evidence="4">
    <location>
        <begin position="133"/>
        <end position="164"/>
    </location>
</feature>
<feature type="compositionally biased region" description="Basic and acidic residues" evidence="4">
    <location>
        <begin position="155"/>
        <end position="164"/>
    </location>
</feature>
<sequence>MDLENKVKKMGLGHEQGFGAPCLKCKEKCEGFELHFWRKICRNCKCGQEEHDVLLSNEEDRKVGKLFEDTKYTTLIAKLKSDGIPMYKRNVMILTNPVAAKKNVSINTVTYEWAPPVHNQALARQYMQMLPKEKQPVAGSEGAQYRKKQLAKQLPAHDQDPSKCHELSPREVKEMEQFVKKYKSEALGVGDVKLPCEMDAQGPKQMYIPGGERSTPPAAGAMEDKSAEHKSTQYSCYCCKLSMKEGDPAIYAERAGYNKLWHPACFVCSICHELLVDMIYFWKNEKLYCGRHYCDSEKPRCAGCDELIFSNEYTQAENQNWHLKHFCCFDCDSILAGEIYVMVNDKPVCKPCYVKNHAVVCQGCHNAIDPEVQRVTYNNFSWHASTECFLCSCCSKCLIGQKFMPVEGMVFCSVECKKMMS</sequence>
<dbReference type="EMBL" id="DP000197">
    <property type="protein sequence ID" value="ABJ08881.1"/>
    <property type="molecule type" value="Genomic_DNA"/>
</dbReference>
<dbReference type="SMR" id="Q07DW1"/>
<dbReference type="STRING" id="37293.ENSANAP00000023607"/>
<dbReference type="Proteomes" id="UP000233020">
    <property type="component" value="Whole Genome Shotgun Assembly"/>
</dbReference>
<dbReference type="GO" id="GO:0005737">
    <property type="term" value="C:cytoplasm"/>
    <property type="evidence" value="ECO:0000250"/>
    <property type="project" value="UniProtKB"/>
</dbReference>
<dbReference type="GO" id="GO:0005925">
    <property type="term" value="C:focal adhesion"/>
    <property type="evidence" value="ECO:0007669"/>
    <property type="project" value="UniProtKB-SubCell"/>
</dbReference>
<dbReference type="GO" id="GO:0008270">
    <property type="term" value="F:zinc ion binding"/>
    <property type="evidence" value="ECO:0000250"/>
    <property type="project" value="UniProtKB"/>
</dbReference>
<dbReference type="GO" id="GO:0008285">
    <property type="term" value="P:negative regulation of cell population proliferation"/>
    <property type="evidence" value="ECO:0000250"/>
    <property type="project" value="UniProtKB"/>
</dbReference>
<dbReference type="CDD" id="cd09413">
    <property type="entry name" value="LIM1_Testin"/>
    <property type="match status" value="1"/>
</dbReference>
<dbReference type="CDD" id="cd09416">
    <property type="entry name" value="LIM2_Testin"/>
    <property type="match status" value="1"/>
</dbReference>
<dbReference type="CDD" id="cd09419">
    <property type="entry name" value="LIM3_Testin"/>
    <property type="match status" value="1"/>
</dbReference>
<dbReference type="CDD" id="cd09829">
    <property type="entry name" value="PET_testin"/>
    <property type="match status" value="1"/>
</dbReference>
<dbReference type="FunFam" id="2.10.110.10:FF:000061">
    <property type="entry name" value="Testin"/>
    <property type="match status" value="1"/>
</dbReference>
<dbReference type="FunFam" id="2.10.110.10:FF:000065">
    <property type="entry name" value="Testin"/>
    <property type="match status" value="1"/>
</dbReference>
<dbReference type="FunFam" id="2.10.110.10:FF:000005">
    <property type="entry name" value="Testin isoform 1"/>
    <property type="match status" value="1"/>
</dbReference>
<dbReference type="Gene3D" id="2.10.110.10">
    <property type="entry name" value="Cysteine Rich Protein"/>
    <property type="match status" value="3"/>
</dbReference>
<dbReference type="InterPro" id="IPR034958">
    <property type="entry name" value="LIM1_Testin"/>
</dbReference>
<dbReference type="InterPro" id="IPR034959">
    <property type="entry name" value="LIM2_Testin"/>
</dbReference>
<dbReference type="InterPro" id="IPR034960">
    <property type="entry name" value="LIM3_Testin"/>
</dbReference>
<dbReference type="InterPro" id="IPR010442">
    <property type="entry name" value="PET_domain"/>
</dbReference>
<dbReference type="InterPro" id="IPR033724">
    <property type="entry name" value="PET_testin"/>
</dbReference>
<dbReference type="InterPro" id="IPR047120">
    <property type="entry name" value="Pk/Esn/Tes"/>
</dbReference>
<dbReference type="InterPro" id="IPR001781">
    <property type="entry name" value="Znf_LIM"/>
</dbReference>
<dbReference type="PANTHER" id="PTHR24211">
    <property type="entry name" value="LIM DOMAIN-CONTAINING PROTEIN"/>
    <property type="match status" value="1"/>
</dbReference>
<dbReference type="PANTHER" id="PTHR24211:SF1">
    <property type="entry name" value="TESTIN"/>
    <property type="match status" value="1"/>
</dbReference>
<dbReference type="Pfam" id="PF00412">
    <property type="entry name" value="LIM"/>
    <property type="match status" value="3"/>
</dbReference>
<dbReference type="Pfam" id="PF06297">
    <property type="entry name" value="PET"/>
    <property type="match status" value="1"/>
</dbReference>
<dbReference type="SMART" id="SM00132">
    <property type="entry name" value="LIM"/>
    <property type="match status" value="3"/>
</dbReference>
<dbReference type="SUPFAM" id="SSF57716">
    <property type="entry name" value="Glucocorticoid receptor-like (DNA-binding domain)"/>
    <property type="match status" value="2"/>
</dbReference>
<dbReference type="PROSITE" id="PS00478">
    <property type="entry name" value="LIM_DOMAIN_1"/>
    <property type="match status" value="2"/>
</dbReference>
<dbReference type="PROSITE" id="PS50023">
    <property type="entry name" value="LIM_DOMAIN_2"/>
    <property type="match status" value="3"/>
</dbReference>
<dbReference type="PROSITE" id="PS51303">
    <property type="entry name" value="PET"/>
    <property type="match status" value="1"/>
</dbReference>
<proteinExistence type="inferred from homology"/>